<dbReference type="EMBL" id="CR753844">
    <property type="protein sequence ID" value="CAM15238.1"/>
    <property type="molecule type" value="Genomic_DNA"/>
</dbReference>
<dbReference type="EMBL" id="DQ360112">
    <property type="protein sequence ID" value="ABC88834.1"/>
    <property type="molecule type" value="mRNA"/>
</dbReference>
<dbReference type="RefSeq" id="NP_001093506.1">
    <property type="nucleotide sequence ID" value="NM_001100036.1"/>
</dbReference>
<dbReference type="RefSeq" id="XP_009299816.1">
    <property type="nucleotide sequence ID" value="XM_009301541.1"/>
</dbReference>
<dbReference type="RefSeq" id="XP_009299817.1">
    <property type="nucleotide sequence ID" value="XM_009301542.2"/>
</dbReference>
<dbReference type="RefSeq" id="XP_017211639.1">
    <property type="nucleotide sequence ID" value="XM_017356150.1"/>
</dbReference>
<dbReference type="RefSeq" id="XP_017211640.1">
    <property type="nucleotide sequence ID" value="XM_017356151.1"/>
</dbReference>
<dbReference type="RefSeq" id="XP_068077378.1">
    <property type="nucleotide sequence ID" value="XM_068221277.1"/>
</dbReference>
<dbReference type="RefSeq" id="XP_068077379.1">
    <property type="nucleotide sequence ID" value="XM_068221278.1"/>
</dbReference>
<dbReference type="SMR" id="A2CER7"/>
<dbReference type="FunCoup" id="A2CER7">
    <property type="interactions" value="345"/>
</dbReference>
<dbReference type="STRING" id="7955.ENSDARP00000051391"/>
<dbReference type="PaxDb" id="7955-ENSDARP00000051391"/>
<dbReference type="Ensembl" id="ENSDART00000051392">
    <property type="protein sequence ID" value="ENSDARP00000051391"/>
    <property type="gene ID" value="ENSDARG00000035459"/>
</dbReference>
<dbReference type="Ensembl" id="ENSDART00000127787">
    <property type="protein sequence ID" value="ENSDARP00000110713"/>
    <property type="gene ID" value="ENSDARG00000035459"/>
</dbReference>
<dbReference type="Ensembl" id="ENSDART00000182367">
    <property type="protein sequence ID" value="ENSDARP00000145247"/>
    <property type="gene ID" value="ENSDARG00000035459"/>
</dbReference>
<dbReference type="Ensembl" id="ENSDART00000188528">
    <property type="protein sequence ID" value="ENSDARP00000150728"/>
    <property type="gene ID" value="ENSDARG00000115176"/>
</dbReference>
<dbReference type="GeneID" id="568387"/>
<dbReference type="KEGG" id="dre:568387"/>
<dbReference type="AGR" id="ZFIN:ZDB-GENE-060531-7"/>
<dbReference type="CTD" id="201305"/>
<dbReference type="ZFIN" id="ZDB-GENE-060531-7">
    <property type="gene designation" value="spns3"/>
</dbReference>
<dbReference type="eggNOG" id="KOG1330">
    <property type="taxonomic scope" value="Eukaryota"/>
</dbReference>
<dbReference type="InParanoid" id="A2CER7"/>
<dbReference type="OMA" id="YTCVYTA"/>
<dbReference type="OrthoDB" id="6770063at2759"/>
<dbReference type="PhylomeDB" id="A2CER7"/>
<dbReference type="PRO" id="PR:A2CER7"/>
<dbReference type="Proteomes" id="UP000000437">
    <property type="component" value="Alternate scaffold 5"/>
</dbReference>
<dbReference type="Proteomes" id="UP000000437">
    <property type="component" value="Chromosome 5"/>
</dbReference>
<dbReference type="Bgee" id="ENSDARG00000035459">
    <property type="expression patterns" value="Expressed in granulocyte and 16 other cell types or tissues"/>
</dbReference>
<dbReference type="GO" id="GO:0016020">
    <property type="term" value="C:membrane"/>
    <property type="evidence" value="ECO:0000318"/>
    <property type="project" value="GO_Central"/>
</dbReference>
<dbReference type="GO" id="GO:0022857">
    <property type="term" value="F:transmembrane transporter activity"/>
    <property type="evidence" value="ECO:0000318"/>
    <property type="project" value="GO_Central"/>
</dbReference>
<dbReference type="GO" id="GO:0006869">
    <property type="term" value="P:lipid transport"/>
    <property type="evidence" value="ECO:0007669"/>
    <property type="project" value="UniProtKB-KW"/>
</dbReference>
<dbReference type="CDD" id="cd17328">
    <property type="entry name" value="MFS_spinster_like"/>
    <property type="match status" value="1"/>
</dbReference>
<dbReference type="Gene3D" id="1.20.1250.20">
    <property type="entry name" value="MFS general substrate transporter like domains"/>
    <property type="match status" value="1"/>
</dbReference>
<dbReference type="InterPro" id="IPR011701">
    <property type="entry name" value="MFS"/>
</dbReference>
<dbReference type="InterPro" id="IPR020846">
    <property type="entry name" value="MFS_dom"/>
</dbReference>
<dbReference type="InterPro" id="IPR044770">
    <property type="entry name" value="MFS_spinster-like"/>
</dbReference>
<dbReference type="InterPro" id="IPR036259">
    <property type="entry name" value="MFS_trans_sf"/>
</dbReference>
<dbReference type="PANTHER" id="PTHR23505:SF67">
    <property type="entry name" value="PROTEIN SPINSTER HOMOLOG 3"/>
    <property type="match status" value="1"/>
</dbReference>
<dbReference type="PANTHER" id="PTHR23505">
    <property type="entry name" value="SPINSTER"/>
    <property type="match status" value="1"/>
</dbReference>
<dbReference type="Pfam" id="PF07690">
    <property type="entry name" value="MFS_1"/>
    <property type="match status" value="1"/>
</dbReference>
<dbReference type="SUPFAM" id="SSF103473">
    <property type="entry name" value="MFS general substrate transporter"/>
    <property type="match status" value="1"/>
</dbReference>
<dbReference type="PROSITE" id="PS50850">
    <property type="entry name" value="MFS"/>
    <property type="match status" value="1"/>
</dbReference>
<keyword id="KW-0445">Lipid transport</keyword>
<keyword id="KW-0472">Membrane</keyword>
<keyword id="KW-1185">Reference proteome</keyword>
<keyword id="KW-0812">Transmembrane</keyword>
<keyword id="KW-1133">Transmembrane helix</keyword>
<keyword id="KW-0813">Transport</keyword>
<reference key="1">
    <citation type="journal article" date="2013" name="Nature">
        <title>The zebrafish reference genome sequence and its relationship to the human genome.</title>
        <authorList>
            <person name="Howe K."/>
            <person name="Clark M.D."/>
            <person name="Torroja C.F."/>
            <person name="Torrance J."/>
            <person name="Berthelot C."/>
            <person name="Muffato M."/>
            <person name="Collins J.E."/>
            <person name="Humphray S."/>
            <person name="McLaren K."/>
            <person name="Matthews L."/>
            <person name="McLaren S."/>
            <person name="Sealy I."/>
            <person name="Caccamo M."/>
            <person name="Churcher C."/>
            <person name="Scott C."/>
            <person name="Barrett J.C."/>
            <person name="Koch R."/>
            <person name="Rauch G.J."/>
            <person name="White S."/>
            <person name="Chow W."/>
            <person name="Kilian B."/>
            <person name="Quintais L.T."/>
            <person name="Guerra-Assuncao J.A."/>
            <person name="Zhou Y."/>
            <person name="Gu Y."/>
            <person name="Yen J."/>
            <person name="Vogel J.H."/>
            <person name="Eyre T."/>
            <person name="Redmond S."/>
            <person name="Banerjee R."/>
            <person name="Chi J."/>
            <person name="Fu B."/>
            <person name="Langley E."/>
            <person name="Maguire S.F."/>
            <person name="Laird G.K."/>
            <person name="Lloyd D."/>
            <person name="Kenyon E."/>
            <person name="Donaldson S."/>
            <person name="Sehra H."/>
            <person name="Almeida-King J."/>
            <person name="Loveland J."/>
            <person name="Trevanion S."/>
            <person name="Jones M."/>
            <person name="Quail M."/>
            <person name="Willey D."/>
            <person name="Hunt A."/>
            <person name="Burton J."/>
            <person name="Sims S."/>
            <person name="McLay K."/>
            <person name="Plumb B."/>
            <person name="Davis J."/>
            <person name="Clee C."/>
            <person name="Oliver K."/>
            <person name="Clark R."/>
            <person name="Riddle C."/>
            <person name="Elliot D."/>
            <person name="Threadgold G."/>
            <person name="Harden G."/>
            <person name="Ware D."/>
            <person name="Begum S."/>
            <person name="Mortimore B."/>
            <person name="Kerry G."/>
            <person name="Heath P."/>
            <person name="Phillimore B."/>
            <person name="Tracey A."/>
            <person name="Corby N."/>
            <person name="Dunn M."/>
            <person name="Johnson C."/>
            <person name="Wood J."/>
            <person name="Clark S."/>
            <person name="Pelan S."/>
            <person name="Griffiths G."/>
            <person name="Smith M."/>
            <person name="Glithero R."/>
            <person name="Howden P."/>
            <person name="Barker N."/>
            <person name="Lloyd C."/>
            <person name="Stevens C."/>
            <person name="Harley J."/>
            <person name="Holt K."/>
            <person name="Panagiotidis G."/>
            <person name="Lovell J."/>
            <person name="Beasley H."/>
            <person name="Henderson C."/>
            <person name="Gordon D."/>
            <person name="Auger K."/>
            <person name="Wright D."/>
            <person name="Collins J."/>
            <person name="Raisen C."/>
            <person name="Dyer L."/>
            <person name="Leung K."/>
            <person name="Robertson L."/>
            <person name="Ambridge K."/>
            <person name="Leongamornlert D."/>
            <person name="McGuire S."/>
            <person name="Gilderthorp R."/>
            <person name="Griffiths C."/>
            <person name="Manthravadi D."/>
            <person name="Nichol S."/>
            <person name="Barker G."/>
            <person name="Whitehead S."/>
            <person name="Kay M."/>
            <person name="Brown J."/>
            <person name="Murnane C."/>
            <person name="Gray E."/>
            <person name="Humphries M."/>
            <person name="Sycamore N."/>
            <person name="Barker D."/>
            <person name="Saunders D."/>
            <person name="Wallis J."/>
            <person name="Babbage A."/>
            <person name="Hammond S."/>
            <person name="Mashreghi-Mohammadi M."/>
            <person name="Barr L."/>
            <person name="Martin S."/>
            <person name="Wray P."/>
            <person name="Ellington A."/>
            <person name="Matthews N."/>
            <person name="Ellwood M."/>
            <person name="Woodmansey R."/>
            <person name="Clark G."/>
            <person name="Cooper J."/>
            <person name="Tromans A."/>
            <person name="Grafham D."/>
            <person name="Skuce C."/>
            <person name="Pandian R."/>
            <person name="Andrews R."/>
            <person name="Harrison E."/>
            <person name="Kimberley A."/>
            <person name="Garnett J."/>
            <person name="Fosker N."/>
            <person name="Hall R."/>
            <person name="Garner P."/>
            <person name="Kelly D."/>
            <person name="Bird C."/>
            <person name="Palmer S."/>
            <person name="Gehring I."/>
            <person name="Berger A."/>
            <person name="Dooley C.M."/>
            <person name="Ersan-Urun Z."/>
            <person name="Eser C."/>
            <person name="Geiger H."/>
            <person name="Geisler M."/>
            <person name="Karotki L."/>
            <person name="Kirn A."/>
            <person name="Konantz J."/>
            <person name="Konantz M."/>
            <person name="Oberlander M."/>
            <person name="Rudolph-Geiger S."/>
            <person name="Teucke M."/>
            <person name="Lanz C."/>
            <person name="Raddatz G."/>
            <person name="Osoegawa K."/>
            <person name="Zhu B."/>
            <person name="Rapp A."/>
            <person name="Widaa S."/>
            <person name="Langford C."/>
            <person name="Yang F."/>
            <person name="Schuster S.C."/>
            <person name="Carter N.P."/>
            <person name="Harrow J."/>
            <person name="Ning Z."/>
            <person name="Herrero J."/>
            <person name="Searle S.M."/>
            <person name="Enright A."/>
            <person name="Geisler R."/>
            <person name="Plasterk R.H."/>
            <person name="Lee C."/>
            <person name="Westerfield M."/>
            <person name="de Jong P.J."/>
            <person name="Zon L.I."/>
            <person name="Postlethwait J.H."/>
            <person name="Nusslein-Volhard C."/>
            <person name="Hubbard T.J."/>
            <person name="Roest Crollius H."/>
            <person name="Rogers J."/>
            <person name="Stemple D.L."/>
        </authorList>
    </citation>
    <scope>NUCLEOTIDE SEQUENCE [LARGE SCALE GENOMIC DNA]</scope>
    <source>
        <strain>Tuebingen</strain>
    </source>
</reference>
<reference key="2">
    <citation type="journal article" date="2008" name="Curr. Biol.">
        <title>The spinster homolog, two of hearts, is required for sphingosine 1-phosphate signaling in zebrafish.</title>
        <authorList>
            <person name="Osborne N."/>
            <person name="Brand-Arzamendi K."/>
            <person name="Ober E.A."/>
            <person name="Jin S.-W."/>
            <person name="Verkade H."/>
            <person name="Holtzman N.G."/>
            <person name="Yelon D."/>
            <person name="Stainier D.Y.R."/>
        </authorList>
    </citation>
    <scope>NUCLEOTIDE SEQUENCE [MRNA] OF 98-498</scope>
</reference>
<gene>
    <name type="primary">spns3</name>
    <name type="synonym">spinl3</name>
    <name type="ORF">si:ch211-117m20.8</name>
</gene>
<comment type="function">
    <text evidence="1">Sphingolipid transporter.</text>
</comment>
<comment type="subcellular location">
    <subcellularLocation>
        <location evidence="3">Membrane</location>
        <topology evidence="3">Multi-pass membrane protein</topology>
    </subcellularLocation>
</comment>
<comment type="similarity">
    <text evidence="3">Belongs to the major facilitator superfamily. Spinster (TC 2.A.1.49) family.</text>
</comment>
<sequence>MASDQHRPKPRLSLRSSTTIRYGSMSSEHPDGDPSTPQTTSISQRRSYIAVAVLCYINLLNYMDRYTIAGVLLRIQKFFFISDSTSGLLQTVFICSFMFLAPVFGYLGDRYDRKLIMIVGLVMWIVTTLGSSFVRKSHFWVLVATRALVGTGEASYSTIAPTIIGDLFAGSKRTLMISFFYIFIPVGSGLGYIIGATVADATGDWRWALRVSPALGGLGLLLLVFLIPNPPRGASDNGGANMETTSYTEDIKYLLKNRSFVWSSLGVTAMAFVTGALAFWTPTFLSRAQVTQGLKQPCKEEPCDSVDSYIFGAITVVTGVVGVFLGTCISKKLRDRVPNADPLICAVGMLSSSPCFFIAIVLASTSIPATYTFIAIGETLLSLNWAILADILLYVVVPNRRATAEALQIMVCHLLGDAGSPYLIGAISDSLSKYNTTDPSWDFRRLEYSVLLCPFIGVLGGLFFLMTSLYIKEDRKAAELLTSGQTPQPEITTVSESV</sequence>
<proteinExistence type="evidence at transcript level"/>
<evidence type="ECO:0000250" key="1"/>
<evidence type="ECO:0000255" key="2"/>
<evidence type="ECO:0000305" key="3"/>
<organism>
    <name type="scientific">Danio rerio</name>
    <name type="common">Zebrafish</name>
    <name type="synonym">Brachydanio rerio</name>
    <dbReference type="NCBI Taxonomy" id="7955"/>
    <lineage>
        <taxon>Eukaryota</taxon>
        <taxon>Metazoa</taxon>
        <taxon>Chordata</taxon>
        <taxon>Craniata</taxon>
        <taxon>Vertebrata</taxon>
        <taxon>Euteleostomi</taxon>
        <taxon>Actinopterygii</taxon>
        <taxon>Neopterygii</taxon>
        <taxon>Teleostei</taxon>
        <taxon>Ostariophysi</taxon>
        <taxon>Cypriniformes</taxon>
        <taxon>Danionidae</taxon>
        <taxon>Danioninae</taxon>
        <taxon>Danio</taxon>
    </lineage>
</organism>
<name>SPNS3_DANRE</name>
<protein>
    <recommendedName>
        <fullName>Protein spinster homolog 3</fullName>
    </recommendedName>
    <alternativeName>
        <fullName>Spinster-like protein 3</fullName>
    </alternativeName>
</protein>
<accession>A2CER7</accession>
<accession>A2SWM3</accession>
<feature type="chain" id="PRO_0000305048" description="Protein spinster homolog 3">
    <location>
        <begin position="1"/>
        <end position="498"/>
    </location>
</feature>
<feature type="transmembrane region" description="Helical" evidence="2">
    <location>
        <begin position="49"/>
        <end position="71"/>
    </location>
</feature>
<feature type="transmembrane region" description="Helical" evidence="2">
    <location>
        <begin position="87"/>
        <end position="107"/>
    </location>
</feature>
<feature type="transmembrane region" description="Helical" evidence="2">
    <location>
        <begin position="114"/>
        <end position="134"/>
    </location>
</feature>
<feature type="transmembrane region" description="Helical" evidence="2">
    <location>
        <begin position="148"/>
        <end position="168"/>
    </location>
</feature>
<feature type="transmembrane region" description="Helical" evidence="2">
    <location>
        <begin position="175"/>
        <end position="195"/>
    </location>
</feature>
<feature type="transmembrane region" description="Helical" evidence="2">
    <location>
        <begin position="207"/>
        <end position="227"/>
    </location>
</feature>
<feature type="transmembrane region" description="Helical" evidence="2">
    <location>
        <begin position="260"/>
        <end position="280"/>
    </location>
</feature>
<feature type="transmembrane region" description="Helical" evidence="2">
    <location>
        <begin position="309"/>
        <end position="329"/>
    </location>
</feature>
<feature type="transmembrane region" description="Helical" evidence="2">
    <location>
        <begin position="343"/>
        <end position="363"/>
    </location>
</feature>
<feature type="transmembrane region" description="Helical" evidence="2">
    <location>
        <begin position="373"/>
        <end position="393"/>
    </location>
</feature>
<feature type="transmembrane region" description="Helical" evidence="2">
    <location>
        <begin position="407"/>
        <end position="427"/>
    </location>
</feature>
<feature type="transmembrane region" description="Helical" evidence="2">
    <location>
        <begin position="451"/>
        <end position="471"/>
    </location>
</feature>